<organism>
    <name type="scientific">Neisseria meningitidis serogroup C (strain 053442)</name>
    <dbReference type="NCBI Taxonomy" id="374833"/>
    <lineage>
        <taxon>Bacteria</taxon>
        <taxon>Pseudomonadati</taxon>
        <taxon>Pseudomonadota</taxon>
        <taxon>Betaproteobacteria</taxon>
        <taxon>Neisseriales</taxon>
        <taxon>Neisseriaceae</taxon>
        <taxon>Neisseria</taxon>
    </lineage>
</organism>
<evidence type="ECO:0000255" key="1">
    <source>
        <dbReference type="HAMAP-Rule" id="MF_00082"/>
    </source>
</evidence>
<sequence>MAFENIISAADKARILAEALPYIRRFSGSVVVIKYGGNAMTEPALKEGFARDVVLLKLVGIHPVIVHGGGPQINAMLEKVGKKGKFVQGMRVTDKEAMDIVEMVLGGHVNKEIVSMINTYGGHAVGVSGRDDHFIKAKKLLIDTPEQNGVDIGQVGTVESIDTGLVKGLIERGCIPVVAPVGVGEKGEAFNINADLVAGKLAEELNAEKLLMMTNIAGVMDKTGNLLTKLTPKRIDELIADGTLYGGMLPKIASAVEAAVNGVKATHIIDGRVPNALLLEIFTDAGIGSMILGGGEDA</sequence>
<comment type="function">
    <text evidence="1">Catalyzes the ATP-dependent phosphorylation of N-acetyl-L-glutamate.</text>
</comment>
<comment type="catalytic activity">
    <reaction evidence="1">
        <text>N-acetyl-L-glutamate + ATP = N-acetyl-L-glutamyl 5-phosphate + ADP</text>
        <dbReference type="Rhea" id="RHEA:14629"/>
        <dbReference type="ChEBI" id="CHEBI:30616"/>
        <dbReference type="ChEBI" id="CHEBI:44337"/>
        <dbReference type="ChEBI" id="CHEBI:57936"/>
        <dbReference type="ChEBI" id="CHEBI:456216"/>
        <dbReference type="EC" id="2.7.2.8"/>
    </reaction>
</comment>
<comment type="pathway">
    <text evidence="1">Amino-acid biosynthesis; L-arginine biosynthesis; N(2)-acetyl-L-ornithine from L-glutamate: step 2/4.</text>
</comment>
<comment type="subcellular location">
    <subcellularLocation>
        <location evidence="1">Cytoplasm</location>
    </subcellularLocation>
</comment>
<comment type="similarity">
    <text evidence="1">Belongs to the acetylglutamate kinase family. ArgB subfamily.</text>
</comment>
<protein>
    <recommendedName>
        <fullName evidence="1">Acetylglutamate kinase</fullName>
        <ecNumber evidence="1">2.7.2.8</ecNumber>
    </recommendedName>
    <alternativeName>
        <fullName evidence="1">N-acetyl-L-glutamate 5-phosphotransferase</fullName>
    </alternativeName>
    <alternativeName>
        <fullName evidence="1">NAG kinase</fullName>
        <shortName evidence="1">NAGK</shortName>
    </alternativeName>
</protein>
<feature type="chain" id="PRO_1000075315" description="Acetylglutamate kinase">
    <location>
        <begin position="1"/>
        <end position="298"/>
    </location>
</feature>
<feature type="binding site" evidence="1">
    <location>
        <begin position="69"/>
        <end position="70"/>
    </location>
    <ligand>
        <name>substrate</name>
    </ligand>
</feature>
<feature type="binding site" evidence="1">
    <location>
        <position position="91"/>
    </location>
    <ligand>
        <name>substrate</name>
    </ligand>
</feature>
<feature type="binding site" evidence="1">
    <location>
        <position position="191"/>
    </location>
    <ligand>
        <name>substrate</name>
    </ligand>
</feature>
<feature type="site" description="Transition state stabilizer" evidence="1">
    <location>
        <position position="34"/>
    </location>
</feature>
<feature type="site" description="Transition state stabilizer" evidence="1">
    <location>
        <position position="251"/>
    </location>
</feature>
<proteinExistence type="inferred from homology"/>
<name>ARGB_NEIM0</name>
<keyword id="KW-0028">Amino-acid biosynthesis</keyword>
<keyword id="KW-0055">Arginine biosynthesis</keyword>
<keyword id="KW-0067">ATP-binding</keyword>
<keyword id="KW-0963">Cytoplasm</keyword>
<keyword id="KW-0418">Kinase</keyword>
<keyword id="KW-0547">Nucleotide-binding</keyword>
<keyword id="KW-0808">Transferase</keyword>
<dbReference type="EC" id="2.7.2.8" evidence="1"/>
<dbReference type="EMBL" id="CP000381">
    <property type="protein sequence ID" value="ABX73172.1"/>
    <property type="molecule type" value="Genomic_DNA"/>
</dbReference>
<dbReference type="RefSeq" id="WP_012221606.1">
    <property type="nucleotide sequence ID" value="NC_010120.1"/>
</dbReference>
<dbReference type="SMR" id="A9LYZ5"/>
<dbReference type="KEGG" id="nmn:NMCC_0992"/>
<dbReference type="HOGENOM" id="CLU_053680_0_0_4"/>
<dbReference type="UniPathway" id="UPA00068">
    <property type="reaction ID" value="UER00107"/>
</dbReference>
<dbReference type="Proteomes" id="UP000001177">
    <property type="component" value="Chromosome"/>
</dbReference>
<dbReference type="GO" id="GO:0005737">
    <property type="term" value="C:cytoplasm"/>
    <property type="evidence" value="ECO:0007669"/>
    <property type="project" value="UniProtKB-SubCell"/>
</dbReference>
<dbReference type="GO" id="GO:0003991">
    <property type="term" value="F:acetylglutamate kinase activity"/>
    <property type="evidence" value="ECO:0007669"/>
    <property type="project" value="UniProtKB-UniRule"/>
</dbReference>
<dbReference type="GO" id="GO:0005524">
    <property type="term" value="F:ATP binding"/>
    <property type="evidence" value="ECO:0007669"/>
    <property type="project" value="UniProtKB-UniRule"/>
</dbReference>
<dbReference type="GO" id="GO:0042450">
    <property type="term" value="P:arginine biosynthetic process via ornithine"/>
    <property type="evidence" value="ECO:0007669"/>
    <property type="project" value="UniProtKB-UniRule"/>
</dbReference>
<dbReference type="GO" id="GO:0006526">
    <property type="term" value="P:L-arginine biosynthetic process"/>
    <property type="evidence" value="ECO:0007669"/>
    <property type="project" value="UniProtKB-UniPathway"/>
</dbReference>
<dbReference type="CDD" id="cd04250">
    <property type="entry name" value="AAK_NAGK-C"/>
    <property type="match status" value="1"/>
</dbReference>
<dbReference type="FunFam" id="3.40.1160.10:FF:000004">
    <property type="entry name" value="Acetylglutamate kinase"/>
    <property type="match status" value="1"/>
</dbReference>
<dbReference type="Gene3D" id="3.40.1160.10">
    <property type="entry name" value="Acetylglutamate kinase-like"/>
    <property type="match status" value="1"/>
</dbReference>
<dbReference type="HAMAP" id="MF_00082">
    <property type="entry name" value="ArgB"/>
    <property type="match status" value="1"/>
</dbReference>
<dbReference type="InterPro" id="IPR036393">
    <property type="entry name" value="AceGlu_kinase-like_sf"/>
</dbReference>
<dbReference type="InterPro" id="IPR004662">
    <property type="entry name" value="AcgluKinase_fam"/>
</dbReference>
<dbReference type="InterPro" id="IPR037528">
    <property type="entry name" value="ArgB"/>
</dbReference>
<dbReference type="InterPro" id="IPR001048">
    <property type="entry name" value="Asp/Glu/Uridylate_kinase"/>
</dbReference>
<dbReference type="InterPro" id="IPR001057">
    <property type="entry name" value="Glu/AcGlu_kinase"/>
</dbReference>
<dbReference type="InterPro" id="IPR041727">
    <property type="entry name" value="NAGK-C"/>
</dbReference>
<dbReference type="NCBIfam" id="TIGR00761">
    <property type="entry name" value="argB"/>
    <property type="match status" value="1"/>
</dbReference>
<dbReference type="PANTHER" id="PTHR23342">
    <property type="entry name" value="N-ACETYLGLUTAMATE SYNTHASE"/>
    <property type="match status" value="1"/>
</dbReference>
<dbReference type="PANTHER" id="PTHR23342:SF0">
    <property type="entry name" value="N-ACETYLGLUTAMATE SYNTHASE, MITOCHONDRIAL"/>
    <property type="match status" value="1"/>
</dbReference>
<dbReference type="Pfam" id="PF00696">
    <property type="entry name" value="AA_kinase"/>
    <property type="match status" value="1"/>
</dbReference>
<dbReference type="PIRSF" id="PIRSF000728">
    <property type="entry name" value="NAGK"/>
    <property type="match status" value="1"/>
</dbReference>
<dbReference type="PRINTS" id="PR00474">
    <property type="entry name" value="GLU5KINASE"/>
</dbReference>
<dbReference type="SUPFAM" id="SSF53633">
    <property type="entry name" value="Carbamate kinase-like"/>
    <property type="match status" value="1"/>
</dbReference>
<reference key="1">
    <citation type="journal article" date="2008" name="Genomics">
        <title>Characterization of ST-4821 complex, a unique Neisseria meningitidis clone.</title>
        <authorList>
            <person name="Peng J."/>
            <person name="Yang L."/>
            <person name="Yang F."/>
            <person name="Yang J."/>
            <person name="Yan Y."/>
            <person name="Nie H."/>
            <person name="Zhang X."/>
            <person name="Xiong Z."/>
            <person name="Jiang Y."/>
            <person name="Cheng F."/>
            <person name="Xu X."/>
            <person name="Chen S."/>
            <person name="Sun L."/>
            <person name="Li W."/>
            <person name="Shen Y."/>
            <person name="Shao Z."/>
            <person name="Liang X."/>
            <person name="Xu J."/>
            <person name="Jin Q."/>
        </authorList>
    </citation>
    <scope>NUCLEOTIDE SEQUENCE [LARGE SCALE GENOMIC DNA]</scope>
    <source>
        <strain>053442</strain>
    </source>
</reference>
<gene>
    <name evidence="1" type="primary">argB</name>
    <name type="ordered locus">NMCC_0992</name>
</gene>
<accession>A9LYZ5</accession>